<comment type="function">
    <text evidence="1">The RuvA-RuvB-RuvC complex processes Holliday junction (HJ) DNA during genetic recombination and DNA repair, while the RuvA-RuvB complex plays an important role in the rescue of blocked DNA replication forks via replication fork reversal (RFR). RuvA specifically binds to HJ cruciform DNA, conferring on it an open structure. The RuvB hexamer acts as an ATP-dependent pump, pulling dsDNA into and through the RuvAB complex. RuvB forms 2 homohexamers on either side of HJ DNA bound by 1 or 2 RuvA tetramers; 4 subunits per hexamer contact DNA at a time. Coordinated motions by a converter formed by DNA-disengaged RuvB subunits stimulates ATP hydrolysis and nucleotide exchange. Immobilization of the converter enables RuvB to convert the ATP-contained energy into a lever motion, pulling 2 nucleotides of DNA out of the RuvA tetramer per ATP hydrolyzed, thus driving DNA branch migration. The RuvB motors rotate together with the DNA substrate, which together with the progressing nucleotide cycle form the mechanistic basis for DNA recombination by continuous HJ branch migration. Branch migration allows RuvC to scan DNA until it finds its consensus sequence, where it cleaves and resolves cruciform DNA.</text>
</comment>
<comment type="catalytic activity">
    <reaction evidence="1">
        <text>ATP + H2O = ADP + phosphate + H(+)</text>
        <dbReference type="Rhea" id="RHEA:13065"/>
        <dbReference type="ChEBI" id="CHEBI:15377"/>
        <dbReference type="ChEBI" id="CHEBI:15378"/>
        <dbReference type="ChEBI" id="CHEBI:30616"/>
        <dbReference type="ChEBI" id="CHEBI:43474"/>
        <dbReference type="ChEBI" id="CHEBI:456216"/>
    </reaction>
</comment>
<comment type="subunit">
    <text evidence="1">Homohexamer. Forms an RuvA(8)-RuvB(12)-Holliday junction (HJ) complex. HJ DNA is sandwiched between 2 RuvA tetramers; dsDNA enters through RuvA and exits via RuvB. An RuvB hexamer assembles on each DNA strand where it exits the tetramer. Each RuvB hexamer is contacted by two RuvA subunits (via domain III) on 2 adjacent RuvB subunits; this complex drives branch migration. In the full resolvosome a probable DNA-RuvA(4)-RuvB(12)-RuvC(2) complex forms which resolves the HJ.</text>
</comment>
<comment type="subcellular location">
    <subcellularLocation>
        <location evidence="1">Cytoplasm</location>
    </subcellularLocation>
</comment>
<comment type="domain">
    <text evidence="1">Has 3 domains, the large (RuvB-L) and small ATPase (RuvB-S) domains and the C-terminal head (RuvB-H) domain. The head domain binds DNA, while the ATPase domains jointly bind ATP, ADP or are empty depending on the state of the subunit in the translocation cycle. During a single DNA translocation step the structure of each domain remains the same, but their relative positions change.</text>
</comment>
<comment type="similarity">
    <text evidence="1">Belongs to the RuvB family.</text>
</comment>
<sequence>MIEADRLIQPQVQGQDELIDRAMRPKMLDEYTGQDDTRAQLKVFIQAAINRREALDHMLIFGPPGLGKTTLAMIVANEMGVNIKSTSGPVLEKAGDLAALLTNLEEGDVLFIDEIHRLSPVVEEILYPAMEDYQLDIMIGDGPAARSIKLDLPPFTLIGATTRAGALTSPLRARFGIPLRLEFYNVADLTTIVTRSANVMNLEIDEQGAIEIAKRSRGTPRIANRLLRRVRDYAEVKHDGKVSQTVAEYALDLLDVDDQGFDYLDRKLLLAIIDKFMGGPVGLDNLAAAIGEDRETIEDVLEPFLIQQGFIQRTPRGRIASQRAYDHFSLVRPEKA</sequence>
<protein>
    <recommendedName>
        <fullName evidence="1">Holliday junction branch migration complex subunit RuvB</fullName>
        <ecNumber evidence="1">3.6.4.-</ecNumber>
    </recommendedName>
</protein>
<keyword id="KW-0067">ATP-binding</keyword>
<keyword id="KW-0963">Cytoplasm</keyword>
<keyword id="KW-0227">DNA damage</keyword>
<keyword id="KW-0233">DNA recombination</keyword>
<keyword id="KW-0234">DNA repair</keyword>
<keyword id="KW-0238">DNA-binding</keyword>
<keyword id="KW-0378">Hydrolase</keyword>
<keyword id="KW-0547">Nucleotide-binding</keyword>
<keyword id="KW-1185">Reference proteome</keyword>
<feature type="chain" id="PRO_1000001473" description="Holliday junction branch migration complex subunit RuvB">
    <location>
        <begin position="1"/>
        <end position="336"/>
    </location>
</feature>
<feature type="region of interest" description="Large ATPase domain (RuvB-L)" evidence="1">
    <location>
        <begin position="4"/>
        <end position="184"/>
    </location>
</feature>
<feature type="region of interest" description="Small ATPAse domain (RuvB-S)" evidence="1">
    <location>
        <begin position="185"/>
        <end position="255"/>
    </location>
</feature>
<feature type="region of interest" description="Head domain (RuvB-H)" evidence="1">
    <location>
        <begin position="258"/>
        <end position="336"/>
    </location>
</feature>
<feature type="binding site" evidence="1">
    <location>
        <position position="24"/>
    </location>
    <ligand>
        <name>ATP</name>
        <dbReference type="ChEBI" id="CHEBI:30616"/>
    </ligand>
</feature>
<feature type="binding site" evidence="1">
    <location>
        <position position="65"/>
    </location>
    <ligand>
        <name>ATP</name>
        <dbReference type="ChEBI" id="CHEBI:30616"/>
    </ligand>
</feature>
<feature type="binding site" evidence="1">
    <location>
        <position position="68"/>
    </location>
    <ligand>
        <name>ATP</name>
        <dbReference type="ChEBI" id="CHEBI:30616"/>
    </ligand>
</feature>
<feature type="binding site" evidence="1">
    <location>
        <position position="69"/>
    </location>
    <ligand>
        <name>ATP</name>
        <dbReference type="ChEBI" id="CHEBI:30616"/>
    </ligand>
</feature>
<feature type="binding site" evidence="1">
    <location>
        <position position="69"/>
    </location>
    <ligand>
        <name>Mg(2+)</name>
        <dbReference type="ChEBI" id="CHEBI:18420"/>
    </ligand>
</feature>
<feature type="binding site" evidence="1">
    <location>
        <position position="70"/>
    </location>
    <ligand>
        <name>ATP</name>
        <dbReference type="ChEBI" id="CHEBI:30616"/>
    </ligand>
</feature>
<feature type="binding site" evidence="1">
    <location>
        <begin position="131"/>
        <end position="133"/>
    </location>
    <ligand>
        <name>ATP</name>
        <dbReference type="ChEBI" id="CHEBI:30616"/>
    </ligand>
</feature>
<feature type="binding site" evidence="1">
    <location>
        <position position="174"/>
    </location>
    <ligand>
        <name>ATP</name>
        <dbReference type="ChEBI" id="CHEBI:30616"/>
    </ligand>
</feature>
<feature type="binding site" evidence="1">
    <location>
        <position position="184"/>
    </location>
    <ligand>
        <name>ATP</name>
        <dbReference type="ChEBI" id="CHEBI:30616"/>
    </ligand>
</feature>
<feature type="binding site" evidence="1">
    <location>
        <position position="221"/>
    </location>
    <ligand>
        <name>ATP</name>
        <dbReference type="ChEBI" id="CHEBI:30616"/>
    </ligand>
</feature>
<feature type="binding site" evidence="1">
    <location>
        <position position="294"/>
    </location>
    <ligand>
        <name>DNA</name>
        <dbReference type="ChEBI" id="CHEBI:16991"/>
    </ligand>
</feature>
<feature type="binding site" evidence="1">
    <location>
        <position position="313"/>
    </location>
    <ligand>
        <name>DNA</name>
        <dbReference type="ChEBI" id="CHEBI:16991"/>
    </ligand>
</feature>
<feature type="binding site" evidence="1">
    <location>
        <position position="318"/>
    </location>
    <ligand>
        <name>DNA</name>
        <dbReference type="ChEBI" id="CHEBI:16991"/>
    </ligand>
</feature>
<evidence type="ECO:0000255" key="1">
    <source>
        <dbReference type="HAMAP-Rule" id="MF_00016"/>
    </source>
</evidence>
<gene>
    <name evidence="1" type="primary">ruvB</name>
    <name type="ordered locus">Sfri_2180</name>
</gene>
<dbReference type="EC" id="3.6.4.-" evidence="1"/>
<dbReference type="EMBL" id="CP000447">
    <property type="protein sequence ID" value="ABI72026.1"/>
    <property type="molecule type" value="Genomic_DNA"/>
</dbReference>
<dbReference type="RefSeq" id="WP_011637636.1">
    <property type="nucleotide sequence ID" value="NC_008345.1"/>
</dbReference>
<dbReference type="SMR" id="Q081N9"/>
<dbReference type="STRING" id="318167.Sfri_2180"/>
<dbReference type="KEGG" id="sfr:Sfri_2180"/>
<dbReference type="eggNOG" id="COG2255">
    <property type="taxonomic scope" value="Bacteria"/>
</dbReference>
<dbReference type="HOGENOM" id="CLU_055599_1_0_6"/>
<dbReference type="OrthoDB" id="9804478at2"/>
<dbReference type="Proteomes" id="UP000000684">
    <property type="component" value="Chromosome"/>
</dbReference>
<dbReference type="GO" id="GO:0005737">
    <property type="term" value="C:cytoplasm"/>
    <property type="evidence" value="ECO:0007669"/>
    <property type="project" value="UniProtKB-SubCell"/>
</dbReference>
<dbReference type="GO" id="GO:0048476">
    <property type="term" value="C:Holliday junction resolvase complex"/>
    <property type="evidence" value="ECO:0007669"/>
    <property type="project" value="UniProtKB-UniRule"/>
</dbReference>
<dbReference type="GO" id="GO:0005524">
    <property type="term" value="F:ATP binding"/>
    <property type="evidence" value="ECO:0007669"/>
    <property type="project" value="UniProtKB-UniRule"/>
</dbReference>
<dbReference type="GO" id="GO:0016887">
    <property type="term" value="F:ATP hydrolysis activity"/>
    <property type="evidence" value="ECO:0007669"/>
    <property type="project" value="InterPro"/>
</dbReference>
<dbReference type="GO" id="GO:0000400">
    <property type="term" value="F:four-way junction DNA binding"/>
    <property type="evidence" value="ECO:0007669"/>
    <property type="project" value="UniProtKB-UniRule"/>
</dbReference>
<dbReference type="GO" id="GO:0009378">
    <property type="term" value="F:four-way junction helicase activity"/>
    <property type="evidence" value="ECO:0007669"/>
    <property type="project" value="InterPro"/>
</dbReference>
<dbReference type="GO" id="GO:0006310">
    <property type="term" value="P:DNA recombination"/>
    <property type="evidence" value="ECO:0007669"/>
    <property type="project" value="UniProtKB-UniRule"/>
</dbReference>
<dbReference type="GO" id="GO:0006281">
    <property type="term" value="P:DNA repair"/>
    <property type="evidence" value="ECO:0007669"/>
    <property type="project" value="UniProtKB-UniRule"/>
</dbReference>
<dbReference type="CDD" id="cd00009">
    <property type="entry name" value="AAA"/>
    <property type="match status" value="1"/>
</dbReference>
<dbReference type="FunFam" id="1.10.10.10:FF:000086">
    <property type="entry name" value="Holliday junction ATP-dependent DNA helicase RuvB"/>
    <property type="match status" value="1"/>
</dbReference>
<dbReference type="FunFam" id="1.10.8.60:FF:000023">
    <property type="entry name" value="Holliday junction ATP-dependent DNA helicase RuvB"/>
    <property type="match status" value="1"/>
</dbReference>
<dbReference type="FunFam" id="3.40.50.300:FF:000073">
    <property type="entry name" value="Holliday junction ATP-dependent DNA helicase RuvB"/>
    <property type="match status" value="1"/>
</dbReference>
<dbReference type="Gene3D" id="1.10.8.60">
    <property type="match status" value="1"/>
</dbReference>
<dbReference type="Gene3D" id="3.40.50.300">
    <property type="entry name" value="P-loop containing nucleotide triphosphate hydrolases"/>
    <property type="match status" value="1"/>
</dbReference>
<dbReference type="Gene3D" id="1.10.10.10">
    <property type="entry name" value="Winged helix-like DNA-binding domain superfamily/Winged helix DNA-binding domain"/>
    <property type="match status" value="1"/>
</dbReference>
<dbReference type="HAMAP" id="MF_00016">
    <property type="entry name" value="DNA_HJ_migration_RuvB"/>
    <property type="match status" value="1"/>
</dbReference>
<dbReference type="InterPro" id="IPR003593">
    <property type="entry name" value="AAA+_ATPase"/>
</dbReference>
<dbReference type="InterPro" id="IPR041445">
    <property type="entry name" value="AAA_lid_4"/>
</dbReference>
<dbReference type="InterPro" id="IPR004605">
    <property type="entry name" value="DNA_helicase_Holl-junc_RuvB"/>
</dbReference>
<dbReference type="InterPro" id="IPR027417">
    <property type="entry name" value="P-loop_NTPase"/>
</dbReference>
<dbReference type="InterPro" id="IPR008824">
    <property type="entry name" value="RuvB-like_N"/>
</dbReference>
<dbReference type="InterPro" id="IPR008823">
    <property type="entry name" value="RuvB_C"/>
</dbReference>
<dbReference type="InterPro" id="IPR036388">
    <property type="entry name" value="WH-like_DNA-bd_sf"/>
</dbReference>
<dbReference type="InterPro" id="IPR036390">
    <property type="entry name" value="WH_DNA-bd_sf"/>
</dbReference>
<dbReference type="NCBIfam" id="NF000868">
    <property type="entry name" value="PRK00080.1"/>
    <property type="match status" value="1"/>
</dbReference>
<dbReference type="NCBIfam" id="TIGR00635">
    <property type="entry name" value="ruvB"/>
    <property type="match status" value="1"/>
</dbReference>
<dbReference type="PANTHER" id="PTHR42848">
    <property type="match status" value="1"/>
</dbReference>
<dbReference type="PANTHER" id="PTHR42848:SF1">
    <property type="entry name" value="HOLLIDAY JUNCTION BRANCH MIGRATION COMPLEX SUBUNIT RUVB"/>
    <property type="match status" value="1"/>
</dbReference>
<dbReference type="Pfam" id="PF17864">
    <property type="entry name" value="AAA_lid_4"/>
    <property type="match status" value="1"/>
</dbReference>
<dbReference type="Pfam" id="PF05491">
    <property type="entry name" value="RuvB_C"/>
    <property type="match status" value="1"/>
</dbReference>
<dbReference type="Pfam" id="PF05496">
    <property type="entry name" value="RuvB_N"/>
    <property type="match status" value="1"/>
</dbReference>
<dbReference type="SMART" id="SM00382">
    <property type="entry name" value="AAA"/>
    <property type="match status" value="1"/>
</dbReference>
<dbReference type="SUPFAM" id="SSF52540">
    <property type="entry name" value="P-loop containing nucleoside triphosphate hydrolases"/>
    <property type="match status" value="1"/>
</dbReference>
<dbReference type="SUPFAM" id="SSF46785">
    <property type="entry name" value="Winged helix' DNA-binding domain"/>
    <property type="match status" value="1"/>
</dbReference>
<accession>Q081N9</accession>
<proteinExistence type="inferred from homology"/>
<name>RUVB_SHEFN</name>
<reference key="1">
    <citation type="submission" date="2006-08" db="EMBL/GenBank/DDBJ databases">
        <title>Complete sequence of Shewanella frigidimarina NCIMB 400.</title>
        <authorList>
            <consortium name="US DOE Joint Genome Institute"/>
            <person name="Copeland A."/>
            <person name="Lucas S."/>
            <person name="Lapidus A."/>
            <person name="Barry K."/>
            <person name="Detter J.C."/>
            <person name="Glavina del Rio T."/>
            <person name="Hammon N."/>
            <person name="Israni S."/>
            <person name="Dalin E."/>
            <person name="Tice H."/>
            <person name="Pitluck S."/>
            <person name="Fredrickson J.K."/>
            <person name="Kolker E."/>
            <person name="McCuel L.A."/>
            <person name="DiChristina T."/>
            <person name="Nealson K.H."/>
            <person name="Newman D."/>
            <person name="Tiedje J.M."/>
            <person name="Zhou J."/>
            <person name="Romine M.F."/>
            <person name="Culley D.E."/>
            <person name="Serres M."/>
            <person name="Chertkov O."/>
            <person name="Brettin T."/>
            <person name="Bruce D."/>
            <person name="Han C."/>
            <person name="Tapia R."/>
            <person name="Gilna P."/>
            <person name="Schmutz J."/>
            <person name="Larimer F."/>
            <person name="Land M."/>
            <person name="Hauser L."/>
            <person name="Kyrpides N."/>
            <person name="Mikhailova N."/>
            <person name="Richardson P."/>
        </authorList>
    </citation>
    <scope>NUCLEOTIDE SEQUENCE [LARGE SCALE GENOMIC DNA]</scope>
    <source>
        <strain>NCIMB 400</strain>
    </source>
</reference>
<organism>
    <name type="scientific">Shewanella frigidimarina (strain NCIMB 400)</name>
    <dbReference type="NCBI Taxonomy" id="318167"/>
    <lineage>
        <taxon>Bacteria</taxon>
        <taxon>Pseudomonadati</taxon>
        <taxon>Pseudomonadota</taxon>
        <taxon>Gammaproteobacteria</taxon>
        <taxon>Alteromonadales</taxon>
        <taxon>Shewanellaceae</taxon>
        <taxon>Shewanella</taxon>
    </lineage>
</organism>